<reference key="1">
    <citation type="journal article" date="1986" name="Proc. Natl. Acad. Sci. U.S.A.">
        <title>Cloning and sequence analysis of complementary DNA encoding an aberrantly rearranged human T-cell gamma chain.</title>
        <authorList>
            <person name="Dialynas D.P."/>
            <person name="Murre C."/>
            <person name="Quertermous T."/>
            <person name="Boss J.M."/>
            <person name="Leiden J.M."/>
            <person name="Seidman J.G."/>
            <person name="Strominger J.L."/>
        </authorList>
    </citation>
    <scope>NUCLEOTIDE SEQUENCE [MRNA] (IMGT ALLELE TRGV3*02)</scope>
</reference>
<reference key="2">
    <citation type="journal article" date="2003" name="Nature">
        <title>The DNA sequence of human chromosome 7.</title>
        <authorList>
            <person name="Hillier L.W."/>
            <person name="Fulton R.S."/>
            <person name="Fulton L.A."/>
            <person name="Graves T.A."/>
            <person name="Pepin K.H."/>
            <person name="Wagner-McPherson C."/>
            <person name="Layman D."/>
            <person name="Maas J."/>
            <person name="Jaeger S."/>
            <person name="Walker R."/>
            <person name="Wylie K."/>
            <person name="Sekhon M."/>
            <person name="Becker M.C."/>
            <person name="O'Laughlin M.D."/>
            <person name="Schaller M.E."/>
            <person name="Fewell G.A."/>
            <person name="Delehaunty K.D."/>
            <person name="Miner T.L."/>
            <person name="Nash W.E."/>
            <person name="Cordes M."/>
            <person name="Du H."/>
            <person name="Sun H."/>
            <person name="Edwards J."/>
            <person name="Bradshaw-Cordum H."/>
            <person name="Ali J."/>
            <person name="Andrews S."/>
            <person name="Isak A."/>
            <person name="Vanbrunt A."/>
            <person name="Nguyen C."/>
            <person name="Du F."/>
            <person name="Lamar B."/>
            <person name="Courtney L."/>
            <person name="Kalicki J."/>
            <person name="Ozersky P."/>
            <person name="Bielicki L."/>
            <person name="Scott K."/>
            <person name="Holmes A."/>
            <person name="Harkins R."/>
            <person name="Harris A."/>
            <person name="Strong C.M."/>
            <person name="Hou S."/>
            <person name="Tomlinson C."/>
            <person name="Dauphin-Kohlberg S."/>
            <person name="Kozlowicz-Reilly A."/>
            <person name="Leonard S."/>
            <person name="Rohlfing T."/>
            <person name="Rock S.M."/>
            <person name="Tin-Wollam A.-M."/>
            <person name="Abbott A."/>
            <person name="Minx P."/>
            <person name="Maupin R."/>
            <person name="Strowmatt C."/>
            <person name="Latreille P."/>
            <person name="Miller N."/>
            <person name="Johnson D."/>
            <person name="Murray J."/>
            <person name="Woessner J.P."/>
            <person name="Wendl M.C."/>
            <person name="Yang S.-P."/>
            <person name="Schultz B.R."/>
            <person name="Wallis J.W."/>
            <person name="Spieth J."/>
            <person name="Bieri T.A."/>
            <person name="Nelson J.O."/>
            <person name="Berkowicz N."/>
            <person name="Wohldmann P.E."/>
            <person name="Cook L.L."/>
            <person name="Hickenbotham M.T."/>
            <person name="Eldred J."/>
            <person name="Williams D."/>
            <person name="Bedell J.A."/>
            <person name="Mardis E.R."/>
            <person name="Clifton S.W."/>
            <person name="Chissoe S.L."/>
            <person name="Marra M.A."/>
            <person name="Raymond C."/>
            <person name="Haugen E."/>
            <person name="Gillett W."/>
            <person name="Zhou Y."/>
            <person name="James R."/>
            <person name="Phelps K."/>
            <person name="Iadanoto S."/>
            <person name="Bubb K."/>
            <person name="Simms E."/>
            <person name="Levy R."/>
            <person name="Clendenning J."/>
            <person name="Kaul R."/>
            <person name="Kent W.J."/>
            <person name="Furey T.S."/>
            <person name="Baertsch R.A."/>
            <person name="Brent M.R."/>
            <person name="Keibler E."/>
            <person name="Flicek P."/>
            <person name="Bork P."/>
            <person name="Suyama M."/>
            <person name="Bailey J.A."/>
            <person name="Portnoy M.E."/>
            <person name="Torrents D."/>
            <person name="Chinwalla A.T."/>
            <person name="Gish W.R."/>
            <person name="Eddy S.R."/>
            <person name="McPherson J.D."/>
            <person name="Olson M.V."/>
            <person name="Eichler E.E."/>
            <person name="Green E.D."/>
            <person name="Waterston R.H."/>
            <person name="Wilson R.K."/>
        </authorList>
    </citation>
    <scope>NUCLEOTIDE SEQUENCE [LARGE SCALE GENOMIC DNA] (IMGT ALLELE TRGV3*02)</scope>
</reference>
<reference key="3">
    <citation type="journal article" date="1986" name="Nature">
        <title>Human T-cell gamma genes contain N segments and have marked junctional variability.</title>
        <authorList>
            <person name="Quertermous T."/>
            <person name="Strauss W."/>
            <person name="Murre C."/>
            <person name="Dialynas D.P."/>
            <person name="Strominger J.L."/>
            <person name="Seidman J.G."/>
        </authorList>
    </citation>
    <scope>NUCLEOTIDE SEQUENCE [GENOMIC DNA] OF 1-117 (IMGT ALLELE TRGV3*02)</scope>
</reference>
<reference key="4">
    <citation type="book" date="2001" name="The T Cell Receptor FactsBook.">
        <title>The T Cell Receptor FactsBook.</title>
        <editorList>
            <person name="Lefranc M.P."/>
            <person name="Lefranc G."/>
        </editorList>
        <authorList>
            <person name="Lefranc M.P."/>
            <person name="Lefranc G."/>
        </authorList>
    </citation>
    <scope>NOMENCLATURE</scope>
</reference>
<reference key="5">
    <citation type="journal article" date="2013" name="Nat. Rev. Immunol.">
        <title>Six-of-the-best: unique contributions of gammadelta T cells to immunology.</title>
        <authorList>
            <person name="Vantourout P."/>
            <person name="Hayday A."/>
        </authorList>
    </citation>
    <scope>REVIEW ON FUNCTION AND ANTIGEN RECOGNITION</scope>
</reference>
<reference key="6">
    <citation type="journal article" date="2014" name="Annu. Rev. Immunol.">
        <title>gammadelta T cells: first line of defense and beyond.</title>
        <authorList>
            <person name="Chien Y.H."/>
            <person name="Meyer C."/>
            <person name="Bonneville M."/>
        </authorList>
    </citation>
    <scope>REVIEW ON GAMMA DELTA T CELL RECEPTOR DIVERSITY</scope>
</reference>
<reference key="7">
    <citation type="journal article" date="2014" name="Front. Immunol.">
        <title>Immunoglobulin and T Cell Receptor Genes: IMGT((R)) and the Birth and Rise of Immunoinformatics.</title>
        <authorList>
            <person name="Lefranc M.P."/>
        </authorList>
    </citation>
    <scope>NOMENCLATURE</scope>
</reference>
<reference key="8">
    <citation type="journal article" date="2015" name="Front. Immunol.">
        <title>Five Layers of Receptor Signaling in gammadelta T-Cell Differentiation and Activation.</title>
        <authorList>
            <person name="Ribeiro S.T."/>
            <person name="Ribot J.C."/>
            <person name="Silva-Santos B."/>
        </authorList>
    </citation>
    <scope>REVIEW ON T CELL RECEPTOR SIGNALING</scope>
    <scope>SUBUNIT</scope>
</reference>
<reference key="9">
    <citation type="journal article" date="2017" name="Nat. Rev. Immunol.">
        <title>gammadelta T cells in homeostasis and host defence of epithelial barrier tissues.</title>
        <authorList>
            <person name="Nielsen M.M."/>
            <person name="Witherden D.A."/>
            <person name="Havran W.L."/>
        </authorList>
    </citation>
    <scope>REVIEW ON FUNCTION</scope>
</reference>
<gene>
    <name evidence="9" type="primary">TRGV3</name>
    <name evidence="11" type="synonym">TCRGV3</name>
</gene>
<sequence>MRWALLVLLAFLSPASQKSSNLEGRTKSVTRQTGSSAEITCDLTVTNTFYIHWYLHQEGKAPQRLLYYDVSTARDVLESGLSPGKYYTHTPRRWSWILRLQNLIENDSGVYYCATWDR</sequence>
<accession>P03979</accession>
<accession>A0A075B6L3</accession>
<dbReference type="EMBL" id="M13231">
    <property type="status" value="NOT_ANNOTATED_CDS"/>
    <property type="molecule type" value="mRNA"/>
</dbReference>
<dbReference type="EMBL" id="AC007245">
    <property type="status" value="NOT_ANNOTATED_CDS"/>
    <property type="molecule type" value="Genomic_DNA"/>
</dbReference>
<dbReference type="EMBL" id="X04038">
    <property type="protein sequence ID" value="CAA27672.1"/>
    <property type="molecule type" value="Genomic_DNA"/>
</dbReference>
<dbReference type="PIR" id="A02017">
    <property type="entry name" value="RWHUGV"/>
</dbReference>
<dbReference type="SMR" id="P03979"/>
<dbReference type="FunCoup" id="P03979">
    <property type="interactions" value="478"/>
</dbReference>
<dbReference type="IntAct" id="P03979">
    <property type="interactions" value="54"/>
</dbReference>
<dbReference type="ChEMBL" id="CHEMBL3580506"/>
<dbReference type="IMGT_GENE-DB" id="TRGV3"/>
<dbReference type="GlyCosmos" id="P03979">
    <property type="glycosylation" value="1 site, No reported glycans"/>
</dbReference>
<dbReference type="GlyGen" id="P03979">
    <property type="glycosylation" value="1 site"/>
</dbReference>
<dbReference type="iPTMnet" id="P03979"/>
<dbReference type="PhosphoSitePlus" id="P03979"/>
<dbReference type="BioMuta" id="TRGV3"/>
<dbReference type="DMDM" id="136506"/>
<dbReference type="ProteomicsDB" id="51626"/>
<dbReference type="Ensembl" id="ENST00000390346.2">
    <property type="protein sequence ID" value="ENSP00000374869.2"/>
    <property type="gene ID" value="ENSG00000211699.2"/>
</dbReference>
<dbReference type="UCSC" id="uc064cyb.1">
    <property type="organism name" value="human"/>
</dbReference>
<dbReference type="AGR" id="HGNC:12288"/>
<dbReference type="GeneCards" id="TRGV3"/>
<dbReference type="HGNC" id="HGNC:12288">
    <property type="gene designation" value="TRGV3"/>
</dbReference>
<dbReference type="HPA" id="ENSG00000211699">
    <property type="expression patterns" value="Tissue enhanced (lymphoid)"/>
</dbReference>
<dbReference type="neXtProt" id="NX_P03979"/>
<dbReference type="OpenTargets" id="ENSG00000211699"/>
<dbReference type="VEuPathDB" id="HostDB:ENSG00000211699"/>
<dbReference type="GeneTree" id="ENSGT00940000153143"/>
<dbReference type="InParanoid" id="P03979"/>
<dbReference type="OMA" id="SGMYHCA"/>
<dbReference type="OrthoDB" id="9628507at2759"/>
<dbReference type="PAN-GO" id="P03979">
    <property type="GO annotations" value="1 GO annotation based on evolutionary models"/>
</dbReference>
<dbReference type="PhylomeDB" id="P03979"/>
<dbReference type="Pharos" id="P03979">
    <property type="development level" value="Tdark"/>
</dbReference>
<dbReference type="PRO" id="PR:P03979"/>
<dbReference type="Proteomes" id="UP000005640">
    <property type="component" value="Chromosome 7"/>
</dbReference>
<dbReference type="RNAct" id="P03979">
    <property type="molecule type" value="protein"/>
</dbReference>
<dbReference type="Bgee" id="ENSG00000211699">
    <property type="expression patterns" value="Expressed in male germ line stem cell (sensu Vertebrata) in testis and 87 other cell types or tissues"/>
</dbReference>
<dbReference type="GO" id="GO:0009897">
    <property type="term" value="C:external side of plasma membrane"/>
    <property type="evidence" value="ECO:0000318"/>
    <property type="project" value="GO_Central"/>
</dbReference>
<dbReference type="GO" id="GO:0005886">
    <property type="term" value="C:plasma membrane"/>
    <property type="evidence" value="ECO:0000303"/>
    <property type="project" value="UniProtKB"/>
</dbReference>
<dbReference type="GO" id="GO:0042101">
    <property type="term" value="C:T cell receptor complex"/>
    <property type="evidence" value="ECO:0007669"/>
    <property type="project" value="UniProtKB-KW"/>
</dbReference>
<dbReference type="GO" id="GO:0042287">
    <property type="term" value="F:MHC protein binding"/>
    <property type="evidence" value="ECO:0000303"/>
    <property type="project" value="UniProtKB"/>
</dbReference>
<dbReference type="GO" id="GO:0042605">
    <property type="term" value="F:peptide antigen binding"/>
    <property type="evidence" value="ECO:0000303"/>
    <property type="project" value="UniProtKB"/>
</dbReference>
<dbReference type="GO" id="GO:0002250">
    <property type="term" value="P:adaptive immune response"/>
    <property type="evidence" value="ECO:0007669"/>
    <property type="project" value="UniProtKB-KW"/>
</dbReference>
<dbReference type="GO" id="GO:0006955">
    <property type="term" value="P:immune response"/>
    <property type="evidence" value="ECO:0000303"/>
    <property type="project" value="UniProtKB"/>
</dbReference>
<dbReference type="GO" id="GO:0045087">
    <property type="term" value="P:innate immune response"/>
    <property type="evidence" value="ECO:0007669"/>
    <property type="project" value="UniProtKB-KW"/>
</dbReference>
<dbReference type="FunFam" id="2.60.40.10:FF:001866">
    <property type="entry name" value="T cell receptor gamma variable 3"/>
    <property type="match status" value="1"/>
</dbReference>
<dbReference type="Gene3D" id="2.60.40.10">
    <property type="entry name" value="Immunoglobulins"/>
    <property type="match status" value="1"/>
</dbReference>
<dbReference type="InterPro" id="IPR007110">
    <property type="entry name" value="Ig-like_dom"/>
</dbReference>
<dbReference type="InterPro" id="IPR036179">
    <property type="entry name" value="Ig-like_dom_sf"/>
</dbReference>
<dbReference type="InterPro" id="IPR013783">
    <property type="entry name" value="Ig-like_fold"/>
</dbReference>
<dbReference type="InterPro" id="IPR013106">
    <property type="entry name" value="Ig_V-set"/>
</dbReference>
<dbReference type="InterPro" id="IPR051117">
    <property type="entry name" value="TRG_var/const_region"/>
</dbReference>
<dbReference type="PANTHER" id="PTHR19256:SF63">
    <property type="entry name" value="T CELL RECEPTOR GAMMA VARIABLE 3-RELATED"/>
    <property type="match status" value="1"/>
</dbReference>
<dbReference type="PANTHER" id="PTHR19256">
    <property type="entry name" value="T-CELL RECEPTOR GAMMA CHAIN"/>
    <property type="match status" value="1"/>
</dbReference>
<dbReference type="Pfam" id="PF07686">
    <property type="entry name" value="V-set"/>
    <property type="match status" value="1"/>
</dbReference>
<dbReference type="SUPFAM" id="SSF48726">
    <property type="entry name" value="Immunoglobulin"/>
    <property type="match status" value="1"/>
</dbReference>
<dbReference type="PROSITE" id="PS50835">
    <property type="entry name" value="IG_LIKE"/>
    <property type="match status" value="1"/>
</dbReference>
<protein>
    <recommendedName>
        <fullName evidence="9">T cell receptor gamma variable 3</fullName>
    </recommendedName>
    <alternativeName>
        <fullName evidence="3">T-cell receptor gamma V-gamma-1.1 region</fullName>
    </alternativeName>
</protein>
<name>TRGV3_HUMAN</name>
<evidence type="ECO:0000255" key="1"/>
<evidence type="ECO:0000255" key="2">
    <source>
        <dbReference type="PROSITE-ProRule" id="PRU00114"/>
    </source>
</evidence>
<evidence type="ECO:0000303" key="3">
    <source>
    </source>
</evidence>
<evidence type="ECO:0000303" key="4">
    <source>
    </source>
</evidence>
<evidence type="ECO:0000303" key="5">
    <source>
    </source>
</evidence>
<evidence type="ECO:0000303" key="6">
    <source>
    </source>
</evidence>
<evidence type="ECO:0000303" key="7">
    <source>
    </source>
</evidence>
<evidence type="ECO:0000303" key="8">
    <source>
    </source>
</evidence>
<evidence type="ECO:0000303" key="9">
    <source ref="4"/>
</evidence>
<evidence type="ECO:0000305" key="10"/>
<evidence type="ECO:0000312" key="11">
    <source>
        <dbReference type="HGNC" id="HGNC:12288"/>
    </source>
</evidence>
<feature type="signal peptide" evidence="1">
    <location>
        <begin position="1"/>
        <end position="17"/>
    </location>
</feature>
<feature type="chain" id="PRO_0000033611" description="T cell receptor gamma variable 3" evidence="1">
    <location>
        <begin position="18"/>
        <end position="118"/>
    </location>
</feature>
<feature type="domain" description="Ig-like" evidence="2">
    <location>
        <begin position="18"/>
        <end position="118" status="greater than"/>
    </location>
</feature>
<feature type="glycosylation site" description="N-linked (GlcNAc...) asparagine" evidence="1">
    <location>
        <position position="106"/>
    </location>
</feature>
<feature type="disulfide bond" evidence="2">
    <location>
        <begin position="41"/>
        <end position="113"/>
    </location>
</feature>
<feature type="non-terminal residue">
    <location>
        <position position="118"/>
    </location>
</feature>
<proteinExistence type="evidence at protein level"/>
<comment type="function">
    <text evidence="4 5 6 7 8">V region of the variable domain of T cell receptor (TR) gamma chain that participates in the antigen recognition (PubMed:24600447). Gamma-delta TRs recognize a variety of self and foreign non-peptide antigens frequently expressed at the epithelial boundaries between the host and external environment, including endogenous lipids presented by MH-like protein CD1D and phosphoantigens presented by butyrophilin-like molecule BTN3A1. Upon antigen recognition induces rapid, innate-like immune responses involved in pathogen clearance and tissue repair (PubMed:23348415, PubMed:28920588). Binding of gamma-delta TR complex to antigen triggers phosphorylation of immunoreceptor tyrosine-based activation motifs (ITAMs) in the CD3 chains by the LCK and FYN kinases, allowing the recruitment, phosphorylation, and activation of ZAP70 that facilitates phosphorylation of the scaffolding proteins LCP2 and LAT. This lead to the formation of a supramolecular signalosome that recruits the phospholipase PLCG1, resulting in calcium mobilization and ERK activation, ultimately leading to T cell expansion and differentiation into effector cells (PubMed:25674089). Gamma-delta TRs are produced through somatic rearrangement of a limited repertoire of variable (V), diversity (D), and joining (J) genes. The potential diversity of gamma-delta TRs is conferred by the unique ability to rearrange (D) genes in tandem and to utilize all three reading frames. The combinatorial diversity is considerably increased by the sequence exonuclease trimming and random nucleotide (N) region additions which occur during the V-(D)-J rearrangements (PubMed:24387714).</text>
</comment>
<comment type="subunit">
    <text evidence="7">Gamma-delta TR is a heterodimer composed of a gamma and delta chain; disulfide-linked. The gamma-delta TR is associated with the transmembrane signaling CD3 coreceptor proteins following the stoichiometry: a single gamma-delta TR heterodimer associates with one CD3D-CD3E heterodimer, one CD3G-CD3E heterodimer and one CD247 homodimer forming a stable octameric structure. Upon activation, gamma-delta TR complex associates with FCER1G to initiate intracellular signaling.</text>
</comment>
<comment type="subcellular location">
    <subcellularLocation>
        <location evidence="10">Cell membrane</location>
    </subcellularLocation>
</comment>
<comment type="polymorphism">
    <text evidence="10">There are several alleles. The sequence shown is that of IMGT allele TRGV3*02.</text>
</comment>
<organism>
    <name type="scientific">Homo sapiens</name>
    <name type="common">Human</name>
    <dbReference type="NCBI Taxonomy" id="9606"/>
    <lineage>
        <taxon>Eukaryota</taxon>
        <taxon>Metazoa</taxon>
        <taxon>Chordata</taxon>
        <taxon>Craniata</taxon>
        <taxon>Vertebrata</taxon>
        <taxon>Euteleostomi</taxon>
        <taxon>Mammalia</taxon>
        <taxon>Eutheria</taxon>
        <taxon>Euarchontoglires</taxon>
        <taxon>Primates</taxon>
        <taxon>Haplorrhini</taxon>
        <taxon>Catarrhini</taxon>
        <taxon>Hominidae</taxon>
        <taxon>Homo</taxon>
    </lineage>
</organism>
<keyword id="KW-1064">Adaptive immunity</keyword>
<keyword id="KW-1003">Cell membrane</keyword>
<keyword id="KW-1015">Disulfide bond</keyword>
<keyword id="KW-0325">Glycoprotein</keyword>
<keyword id="KW-0391">Immunity</keyword>
<keyword id="KW-0393">Immunoglobulin domain</keyword>
<keyword id="KW-0399">Innate immunity</keyword>
<keyword id="KW-0472">Membrane</keyword>
<keyword id="KW-0675">Receptor</keyword>
<keyword id="KW-1185">Reference proteome</keyword>
<keyword id="KW-0732">Signal</keyword>
<keyword id="KW-1279">T cell receptor</keyword>